<keyword id="KW-0131">Cell cycle</keyword>
<keyword id="KW-0132">Cell division</keyword>
<keyword id="KW-0238">DNA-binding</keyword>
<gene>
    <name evidence="1" type="primary">whiA</name>
    <name type="ordered locus">Spy49_0547</name>
</gene>
<dbReference type="EMBL" id="CP000829">
    <property type="protein sequence ID" value="ACI60874.1"/>
    <property type="molecule type" value="Genomic_DNA"/>
</dbReference>
<dbReference type="SMR" id="B5XKL2"/>
<dbReference type="KEGG" id="soz:Spy49_0547"/>
<dbReference type="HOGENOM" id="CLU_053282_0_0_9"/>
<dbReference type="Proteomes" id="UP000001039">
    <property type="component" value="Chromosome"/>
</dbReference>
<dbReference type="GO" id="GO:0003677">
    <property type="term" value="F:DNA binding"/>
    <property type="evidence" value="ECO:0007669"/>
    <property type="project" value="UniProtKB-UniRule"/>
</dbReference>
<dbReference type="GO" id="GO:0051301">
    <property type="term" value="P:cell division"/>
    <property type="evidence" value="ECO:0007669"/>
    <property type="project" value="UniProtKB-UniRule"/>
</dbReference>
<dbReference type="GO" id="GO:0043937">
    <property type="term" value="P:regulation of sporulation"/>
    <property type="evidence" value="ECO:0007669"/>
    <property type="project" value="InterPro"/>
</dbReference>
<dbReference type="Gene3D" id="3.10.28.10">
    <property type="entry name" value="Homing endonucleases"/>
    <property type="match status" value="1"/>
</dbReference>
<dbReference type="HAMAP" id="MF_01420">
    <property type="entry name" value="HTH_type_WhiA"/>
    <property type="match status" value="1"/>
</dbReference>
<dbReference type="InterPro" id="IPR027434">
    <property type="entry name" value="Homing_endonucl"/>
</dbReference>
<dbReference type="InterPro" id="IPR018478">
    <property type="entry name" value="Sporu_reg_WhiA_N_dom"/>
</dbReference>
<dbReference type="InterPro" id="IPR003802">
    <property type="entry name" value="Sporulation_regulator_WhiA"/>
</dbReference>
<dbReference type="InterPro" id="IPR023054">
    <property type="entry name" value="Sporulation_regulator_WhiA_C"/>
</dbReference>
<dbReference type="InterPro" id="IPR039518">
    <property type="entry name" value="WhiA_LAGLIDADG_dom"/>
</dbReference>
<dbReference type="NCBIfam" id="TIGR00647">
    <property type="entry name" value="DNA_bind_WhiA"/>
    <property type="match status" value="1"/>
</dbReference>
<dbReference type="PANTHER" id="PTHR37307">
    <property type="entry name" value="CELL DIVISION PROTEIN WHIA-RELATED"/>
    <property type="match status" value="1"/>
</dbReference>
<dbReference type="PANTHER" id="PTHR37307:SF1">
    <property type="entry name" value="CELL DIVISION PROTEIN WHIA-RELATED"/>
    <property type="match status" value="1"/>
</dbReference>
<dbReference type="Pfam" id="PF02650">
    <property type="entry name" value="HTH_WhiA"/>
    <property type="match status" value="1"/>
</dbReference>
<dbReference type="Pfam" id="PF14527">
    <property type="entry name" value="LAGLIDADG_WhiA"/>
    <property type="match status" value="1"/>
</dbReference>
<dbReference type="Pfam" id="PF10298">
    <property type="entry name" value="WhiA_N"/>
    <property type="match status" value="1"/>
</dbReference>
<dbReference type="SUPFAM" id="SSF55608">
    <property type="entry name" value="Homing endonucleases"/>
    <property type="match status" value="1"/>
</dbReference>
<organism>
    <name type="scientific">Streptococcus pyogenes serotype M49 (strain NZ131)</name>
    <dbReference type="NCBI Taxonomy" id="471876"/>
    <lineage>
        <taxon>Bacteria</taxon>
        <taxon>Bacillati</taxon>
        <taxon>Bacillota</taxon>
        <taxon>Bacilli</taxon>
        <taxon>Lactobacillales</taxon>
        <taxon>Streptococcaceae</taxon>
        <taxon>Streptococcus</taxon>
    </lineage>
</organism>
<feature type="chain" id="PRO_0000376590" description="Probable cell division protein WhiA">
    <location>
        <begin position="1"/>
        <end position="303"/>
    </location>
</feature>
<feature type="DNA-binding region" description="H-T-H motif" evidence="1">
    <location>
        <begin position="272"/>
        <end position="303"/>
    </location>
</feature>
<comment type="function">
    <text evidence="1">Involved in cell division and chromosome segregation.</text>
</comment>
<comment type="similarity">
    <text evidence="1">Belongs to the WhiA family.</text>
</comment>
<reference key="1">
    <citation type="journal article" date="2008" name="J. Bacteriol.">
        <title>Genome sequence of a nephritogenic and highly transformable M49 strain of Streptococcus pyogenes.</title>
        <authorList>
            <person name="McShan W.M."/>
            <person name="Ferretti J.J."/>
            <person name="Karasawa T."/>
            <person name="Suvorov A.N."/>
            <person name="Lin S."/>
            <person name="Qin B."/>
            <person name="Jia H."/>
            <person name="Kenton S."/>
            <person name="Najar F."/>
            <person name="Wu H."/>
            <person name="Scott J."/>
            <person name="Roe B.A."/>
            <person name="Savic D.J."/>
        </authorList>
    </citation>
    <scope>NUCLEOTIDE SEQUENCE [LARGE SCALE GENOMIC DNA]</scope>
    <source>
        <strain>NZ131</strain>
    </source>
</reference>
<accession>B5XKL2</accession>
<sequence>MSFTTKVKEELIHLSTGDNNELAAIIKLSGSLGLAHQSLHLSITTENAKIARYIYSLIEDAYVIVPEIRYHQKTNLRKNRVYTVYVEQGVETILADLKLADSFFGLETGIEPQVLSDDNAGRSYLKGAFLAAGSIRDPESGKYQLEIYSVYLDHAQDLAQLMQKFMLDAKTIEHKSGAVTYVQKAEDIMDFLIIIGAMSCKEDFEAIKLLREARNDINRANNAETANIAKTISASMKTINNIIKIMDTIGLESLPIELQQVAQLRVKHPDYSIQQVADALEFPITKSGVNHRLRKINKIADDL</sequence>
<proteinExistence type="inferred from homology"/>
<evidence type="ECO:0000255" key="1">
    <source>
        <dbReference type="HAMAP-Rule" id="MF_01420"/>
    </source>
</evidence>
<name>WHIA_STRPZ</name>
<protein>
    <recommendedName>
        <fullName evidence="1">Probable cell division protein WhiA</fullName>
    </recommendedName>
</protein>